<accession>A6VEC8</accession>
<gene>
    <name evidence="1" type="primary">dut</name>
    <name type="ordered locus">PSPA7_6097</name>
</gene>
<sequence length="151" mass="15980">MHSLQAKILDPRLGTDFPLPQYATPGSAGLDLRAMLEEDTVLGPGQTLLIPTGLSIHIADPGLAALVLPRSGLGHKHGIVLGNLVGLIDSDYQGELMVSCWNRGESPFTIAVGERIAQLVLVPVVQAHFELVEQFDESQRGAGGFGHSGSH</sequence>
<proteinExistence type="inferred from homology"/>
<reference key="1">
    <citation type="submission" date="2007-06" db="EMBL/GenBank/DDBJ databases">
        <authorList>
            <person name="Dodson R.J."/>
            <person name="Harkins D."/>
            <person name="Paulsen I.T."/>
        </authorList>
    </citation>
    <scope>NUCLEOTIDE SEQUENCE [LARGE SCALE GENOMIC DNA]</scope>
    <source>
        <strain>DSM 24068 / PA7</strain>
    </source>
</reference>
<evidence type="ECO:0000255" key="1">
    <source>
        <dbReference type="HAMAP-Rule" id="MF_00116"/>
    </source>
</evidence>
<protein>
    <recommendedName>
        <fullName evidence="1">Deoxyuridine 5'-triphosphate nucleotidohydrolase</fullName>
        <shortName evidence="1">dUTPase</shortName>
        <ecNumber evidence="1">3.6.1.23</ecNumber>
    </recommendedName>
    <alternativeName>
        <fullName evidence="1">dUTP pyrophosphatase</fullName>
    </alternativeName>
</protein>
<comment type="function">
    <text evidence="1">This enzyme is involved in nucleotide metabolism: it produces dUMP, the immediate precursor of thymidine nucleotides and it decreases the intracellular concentration of dUTP so that uracil cannot be incorporated into DNA.</text>
</comment>
<comment type="catalytic activity">
    <reaction evidence="1">
        <text>dUTP + H2O = dUMP + diphosphate + H(+)</text>
        <dbReference type="Rhea" id="RHEA:10248"/>
        <dbReference type="ChEBI" id="CHEBI:15377"/>
        <dbReference type="ChEBI" id="CHEBI:15378"/>
        <dbReference type="ChEBI" id="CHEBI:33019"/>
        <dbReference type="ChEBI" id="CHEBI:61555"/>
        <dbReference type="ChEBI" id="CHEBI:246422"/>
        <dbReference type="EC" id="3.6.1.23"/>
    </reaction>
</comment>
<comment type="cofactor">
    <cofactor evidence="1">
        <name>Mg(2+)</name>
        <dbReference type="ChEBI" id="CHEBI:18420"/>
    </cofactor>
</comment>
<comment type="pathway">
    <text evidence="1">Pyrimidine metabolism; dUMP biosynthesis; dUMP from dCTP (dUTP route): step 2/2.</text>
</comment>
<comment type="similarity">
    <text evidence="1">Belongs to the dUTPase family.</text>
</comment>
<name>DUT_PSEP7</name>
<dbReference type="EC" id="3.6.1.23" evidence="1"/>
<dbReference type="EMBL" id="CP000744">
    <property type="protein sequence ID" value="ABR82574.1"/>
    <property type="molecule type" value="Genomic_DNA"/>
</dbReference>
<dbReference type="RefSeq" id="WP_003156469.1">
    <property type="nucleotide sequence ID" value="NC_009656.1"/>
</dbReference>
<dbReference type="SMR" id="A6VEC8"/>
<dbReference type="GeneID" id="77223853"/>
<dbReference type="KEGG" id="pap:PSPA7_6097"/>
<dbReference type="HOGENOM" id="CLU_068508_1_1_6"/>
<dbReference type="UniPathway" id="UPA00610">
    <property type="reaction ID" value="UER00666"/>
</dbReference>
<dbReference type="Proteomes" id="UP000001582">
    <property type="component" value="Chromosome"/>
</dbReference>
<dbReference type="GO" id="GO:0004170">
    <property type="term" value="F:dUTP diphosphatase activity"/>
    <property type="evidence" value="ECO:0007669"/>
    <property type="project" value="UniProtKB-UniRule"/>
</dbReference>
<dbReference type="GO" id="GO:0000287">
    <property type="term" value="F:magnesium ion binding"/>
    <property type="evidence" value="ECO:0007669"/>
    <property type="project" value="UniProtKB-UniRule"/>
</dbReference>
<dbReference type="GO" id="GO:0006226">
    <property type="term" value="P:dUMP biosynthetic process"/>
    <property type="evidence" value="ECO:0007669"/>
    <property type="project" value="UniProtKB-UniRule"/>
</dbReference>
<dbReference type="GO" id="GO:0046081">
    <property type="term" value="P:dUTP catabolic process"/>
    <property type="evidence" value="ECO:0007669"/>
    <property type="project" value="InterPro"/>
</dbReference>
<dbReference type="CDD" id="cd07557">
    <property type="entry name" value="trimeric_dUTPase"/>
    <property type="match status" value="1"/>
</dbReference>
<dbReference type="FunFam" id="2.70.40.10:FF:000002">
    <property type="entry name" value="dUTP diphosphatase"/>
    <property type="match status" value="1"/>
</dbReference>
<dbReference type="Gene3D" id="2.70.40.10">
    <property type="match status" value="1"/>
</dbReference>
<dbReference type="HAMAP" id="MF_00116">
    <property type="entry name" value="dUTPase_bact"/>
    <property type="match status" value="1"/>
</dbReference>
<dbReference type="InterPro" id="IPR008181">
    <property type="entry name" value="dUTPase"/>
</dbReference>
<dbReference type="InterPro" id="IPR029054">
    <property type="entry name" value="dUTPase-like"/>
</dbReference>
<dbReference type="InterPro" id="IPR036157">
    <property type="entry name" value="dUTPase-like_sf"/>
</dbReference>
<dbReference type="InterPro" id="IPR033704">
    <property type="entry name" value="dUTPase_trimeric"/>
</dbReference>
<dbReference type="NCBIfam" id="TIGR00576">
    <property type="entry name" value="dut"/>
    <property type="match status" value="1"/>
</dbReference>
<dbReference type="NCBIfam" id="NF001862">
    <property type="entry name" value="PRK00601.1"/>
    <property type="match status" value="1"/>
</dbReference>
<dbReference type="PANTHER" id="PTHR11241">
    <property type="entry name" value="DEOXYURIDINE 5'-TRIPHOSPHATE NUCLEOTIDOHYDROLASE"/>
    <property type="match status" value="1"/>
</dbReference>
<dbReference type="PANTHER" id="PTHR11241:SF0">
    <property type="entry name" value="DEOXYURIDINE 5'-TRIPHOSPHATE NUCLEOTIDOHYDROLASE"/>
    <property type="match status" value="1"/>
</dbReference>
<dbReference type="Pfam" id="PF00692">
    <property type="entry name" value="dUTPase"/>
    <property type="match status" value="1"/>
</dbReference>
<dbReference type="SUPFAM" id="SSF51283">
    <property type="entry name" value="dUTPase-like"/>
    <property type="match status" value="1"/>
</dbReference>
<organism>
    <name type="scientific">Pseudomonas paraeruginosa (strain DSM 24068 / PA7)</name>
    <name type="common">Pseudomonas aeruginosa (strain PA7)</name>
    <dbReference type="NCBI Taxonomy" id="381754"/>
    <lineage>
        <taxon>Bacteria</taxon>
        <taxon>Pseudomonadati</taxon>
        <taxon>Pseudomonadota</taxon>
        <taxon>Gammaproteobacteria</taxon>
        <taxon>Pseudomonadales</taxon>
        <taxon>Pseudomonadaceae</taxon>
        <taxon>Pseudomonas</taxon>
        <taxon>Pseudomonas paraeruginosa</taxon>
    </lineage>
</organism>
<feature type="chain" id="PRO_1000015493" description="Deoxyuridine 5'-triphosphate nucleotidohydrolase">
    <location>
        <begin position="1"/>
        <end position="151"/>
    </location>
</feature>
<feature type="binding site" evidence="1">
    <location>
        <begin position="70"/>
        <end position="72"/>
    </location>
    <ligand>
        <name>substrate</name>
    </ligand>
</feature>
<feature type="binding site" evidence="1">
    <location>
        <position position="83"/>
    </location>
    <ligand>
        <name>substrate</name>
    </ligand>
</feature>
<feature type="binding site" evidence="1">
    <location>
        <begin position="87"/>
        <end position="89"/>
    </location>
    <ligand>
        <name>substrate</name>
    </ligand>
</feature>
<feature type="binding site" evidence="1">
    <location>
        <position position="97"/>
    </location>
    <ligand>
        <name>substrate</name>
    </ligand>
</feature>
<keyword id="KW-0378">Hydrolase</keyword>
<keyword id="KW-0460">Magnesium</keyword>
<keyword id="KW-0479">Metal-binding</keyword>
<keyword id="KW-0546">Nucleotide metabolism</keyword>